<feature type="chain" id="PRO_0000412044" description="CASP-like protein 1D1">
    <location>
        <begin position="1"/>
        <end position="196"/>
    </location>
</feature>
<feature type="topological domain" description="Cytoplasmic" evidence="2">
    <location>
        <begin position="1"/>
        <end position="29"/>
    </location>
</feature>
<feature type="transmembrane region" description="Helical" evidence="2">
    <location>
        <begin position="30"/>
        <end position="50"/>
    </location>
</feature>
<feature type="topological domain" description="Extracellular" evidence="2">
    <location>
        <begin position="51"/>
        <end position="84"/>
    </location>
</feature>
<feature type="transmembrane region" description="Helical" evidence="2">
    <location>
        <begin position="85"/>
        <end position="105"/>
    </location>
</feature>
<feature type="topological domain" description="Cytoplasmic" evidence="2">
    <location>
        <begin position="106"/>
        <end position="112"/>
    </location>
</feature>
<feature type="transmembrane region" description="Helical" evidence="2">
    <location>
        <begin position="113"/>
        <end position="133"/>
    </location>
</feature>
<feature type="topological domain" description="Extracellular" evidence="2">
    <location>
        <begin position="134"/>
        <end position="167"/>
    </location>
</feature>
<feature type="transmembrane region" description="Helical" evidence="2">
    <location>
        <begin position="168"/>
        <end position="188"/>
    </location>
</feature>
<feature type="topological domain" description="Cytoplasmic" evidence="2">
    <location>
        <begin position="189"/>
        <end position="196"/>
    </location>
</feature>
<feature type="region of interest" description="Disordered" evidence="3">
    <location>
        <begin position="1"/>
        <end position="22"/>
    </location>
</feature>
<feature type="compositionally biased region" description="Basic and acidic residues" evidence="3">
    <location>
        <begin position="1"/>
        <end position="18"/>
    </location>
</feature>
<proteinExistence type="inferred from homology"/>
<accession>B9HMP5</accession>
<evidence type="ECO:0000250" key="1"/>
<evidence type="ECO:0000255" key="2"/>
<evidence type="ECO:0000256" key="3">
    <source>
        <dbReference type="SAM" id="MobiDB-lite"/>
    </source>
</evidence>
<evidence type="ECO:0000305" key="4"/>
<reference key="1">
    <citation type="journal article" date="2006" name="Science">
        <title>The genome of black cottonwood, Populus trichocarpa (Torr. &amp; Gray).</title>
        <authorList>
            <person name="Tuskan G.A."/>
            <person name="Difazio S."/>
            <person name="Jansson S."/>
            <person name="Bohlmann J."/>
            <person name="Grigoriev I."/>
            <person name="Hellsten U."/>
            <person name="Putnam N."/>
            <person name="Ralph S."/>
            <person name="Rombauts S."/>
            <person name="Salamov A."/>
            <person name="Schein J."/>
            <person name="Sterck L."/>
            <person name="Aerts A."/>
            <person name="Bhalerao R.R."/>
            <person name="Bhalerao R.P."/>
            <person name="Blaudez D."/>
            <person name="Boerjan W."/>
            <person name="Brun A."/>
            <person name="Brunner A."/>
            <person name="Busov V."/>
            <person name="Campbell M."/>
            <person name="Carlson J."/>
            <person name="Chalot M."/>
            <person name="Chapman J."/>
            <person name="Chen G.-L."/>
            <person name="Cooper D."/>
            <person name="Coutinho P.M."/>
            <person name="Couturier J."/>
            <person name="Covert S."/>
            <person name="Cronk Q."/>
            <person name="Cunningham R."/>
            <person name="Davis J."/>
            <person name="Degroeve S."/>
            <person name="Dejardin A."/>
            <person name="dePamphilis C.W."/>
            <person name="Detter J."/>
            <person name="Dirks B."/>
            <person name="Dubchak I."/>
            <person name="Duplessis S."/>
            <person name="Ehlting J."/>
            <person name="Ellis B."/>
            <person name="Gendler K."/>
            <person name="Goodstein D."/>
            <person name="Gribskov M."/>
            <person name="Grimwood J."/>
            <person name="Groover A."/>
            <person name="Gunter L."/>
            <person name="Hamberger B."/>
            <person name="Heinze B."/>
            <person name="Helariutta Y."/>
            <person name="Henrissat B."/>
            <person name="Holligan D."/>
            <person name="Holt R."/>
            <person name="Huang W."/>
            <person name="Islam-Faridi N."/>
            <person name="Jones S."/>
            <person name="Jones-Rhoades M."/>
            <person name="Jorgensen R."/>
            <person name="Joshi C."/>
            <person name="Kangasjaervi J."/>
            <person name="Karlsson J."/>
            <person name="Kelleher C."/>
            <person name="Kirkpatrick R."/>
            <person name="Kirst M."/>
            <person name="Kohler A."/>
            <person name="Kalluri U."/>
            <person name="Larimer F."/>
            <person name="Leebens-Mack J."/>
            <person name="Leple J.-C."/>
            <person name="Locascio P."/>
            <person name="Lou Y."/>
            <person name="Lucas S."/>
            <person name="Martin F."/>
            <person name="Montanini B."/>
            <person name="Napoli C."/>
            <person name="Nelson D.R."/>
            <person name="Nelson C."/>
            <person name="Nieminen K."/>
            <person name="Nilsson O."/>
            <person name="Pereda V."/>
            <person name="Peter G."/>
            <person name="Philippe R."/>
            <person name="Pilate G."/>
            <person name="Poliakov A."/>
            <person name="Razumovskaya J."/>
            <person name="Richardson P."/>
            <person name="Rinaldi C."/>
            <person name="Ritland K."/>
            <person name="Rouze P."/>
            <person name="Ryaboy D."/>
            <person name="Schmutz J."/>
            <person name="Schrader J."/>
            <person name="Segerman B."/>
            <person name="Shin H."/>
            <person name="Siddiqui A."/>
            <person name="Sterky F."/>
            <person name="Terry A."/>
            <person name="Tsai C.-J."/>
            <person name="Uberbacher E."/>
            <person name="Unneberg P."/>
            <person name="Vahala J."/>
            <person name="Wall K."/>
            <person name="Wessler S."/>
            <person name="Yang G."/>
            <person name="Yin T."/>
            <person name="Douglas C."/>
            <person name="Marra M."/>
            <person name="Sandberg G."/>
            <person name="Van de Peer Y."/>
            <person name="Rokhsar D.S."/>
        </authorList>
    </citation>
    <scope>NUCLEOTIDE SEQUENCE [LARGE SCALE GENOMIC DNA]</scope>
    <source>
        <strain>cv. Nisqually</strain>
    </source>
</reference>
<reference key="2">
    <citation type="submission" date="2008-12" db="EMBL/GenBank/DDBJ databases">
        <authorList>
            <consortium name="US DOE Joint Genome Institute (JGI-PGF)"/>
            <person name="Grigoriev I.V."/>
            <person name="Terry A."/>
            <person name="Salamov A.A."/>
            <person name="Otillar R."/>
            <person name="Lou Y."/>
            <person name="Lucas S."/>
            <person name="Hammon N."/>
            <person name="Glavina del Rio T."/>
            <person name="Detter J."/>
            <person name="Kalin E."/>
            <person name="Tice H."/>
            <person name="Pitluck S."/>
            <person name="Chapman J."/>
            <person name="Putnam N.H."/>
            <person name="Brunner A."/>
            <person name="Busov V."/>
            <person name="Campbell M."/>
            <person name="Chalot M."/>
            <person name="Covert S."/>
            <person name="Davis J."/>
            <person name="DiFazio S."/>
            <person name="Gribskov M."/>
            <person name="Gunter L."/>
            <person name="Hamberger B."/>
            <person name="Jansson S."/>
            <person name="Joshi C."/>
            <person name="Larimer F."/>
            <person name="Martin F."/>
            <person name="Napoli C."/>
            <person name="Nelson D."/>
            <person name="Ralph S."/>
            <person name="Rombauts S."/>
            <person name="Rouze P."/>
            <person name="Schrader J."/>
            <person name="Tsai C."/>
            <person name="Vahala J."/>
            <person name="Tuskan G."/>
            <person name="Rokhsar D."/>
        </authorList>
    </citation>
    <scope>GENOME REANNOTATION</scope>
    <source>
        <strain>cv. Nisqually</strain>
    </source>
</reference>
<reference key="3">
    <citation type="journal article" date="2014" name="Plant Physiol.">
        <title>Functional and evolutionary analysis of the CASPARIAN STRIP MEMBRANE DOMAIN PROTEIN family.</title>
        <authorList>
            <person name="Roppolo D."/>
            <person name="Boeckmann B."/>
            <person name="Pfister A."/>
            <person name="Boutet E."/>
            <person name="Rubio M.C."/>
            <person name="Denervaud-Tendon V."/>
            <person name="Vermeer J.E."/>
            <person name="Gheyselinck J."/>
            <person name="Xenarios I."/>
            <person name="Geldner N."/>
        </authorList>
    </citation>
    <scope>GENE FAMILY</scope>
    <scope>NOMENCLATURE</scope>
</reference>
<dbReference type="EMBL" id="CM009297">
    <property type="protein sequence ID" value="EEE90122.2"/>
    <property type="molecule type" value="Genomic_DNA"/>
</dbReference>
<dbReference type="RefSeq" id="XP_002312755.2">
    <property type="nucleotide sequence ID" value="XM_002312719.2"/>
</dbReference>
<dbReference type="SMR" id="B9HMP5"/>
<dbReference type="FunCoup" id="B9HMP5">
    <property type="interactions" value="265"/>
</dbReference>
<dbReference type="STRING" id="3694.B9HMP5"/>
<dbReference type="KEGG" id="pop:7481640"/>
<dbReference type="eggNOG" id="ENOG502S2UF">
    <property type="taxonomic scope" value="Eukaryota"/>
</dbReference>
<dbReference type="HOGENOM" id="CLU_066104_1_2_1"/>
<dbReference type="InParanoid" id="B9HMP5"/>
<dbReference type="OrthoDB" id="1926504at2759"/>
<dbReference type="Proteomes" id="UP000006729">
    <property type="component" value="Chromosome 8"/>
</dbReference>
<dbReference type="ExpressionAtlas" id="B9HMP5">
    <property type="expression patterns" value="differential"/>
</dbReference>
<dbReference type="GO" id="GO:0005886">
    <property type="term" value="C:plasma membrane"/>
    <property type="evidence" value="ECO:0007669"/>
    <property type="project" value="UniProtKB-SubCell"/>
</dbReference>
<dbReference type="InterPro" id="IPR006459">
    <property type="entry name" value="CASP/CASPL"/>
</dbReference>
<dbReference type="InterPro" id="IPR006702">
    <property type="entry name" value="CASP_dom"/>
</dbReference>
<dbReference type="InterPro" id="IPR044173">
    <property type="entry name" value="CASPL"/>
</dbReference>
<dbReference type="NCBIfam" id="TIGR01569">
    <property type="entry name" value="A_tha_TIGR01569"/>
    <property type="match status" value="1"/>
</dbReference>
<dbReference type="PANTHER" id="PTHR36488">
    <property type="entry name" value="CASP-LIKE PROTEIN 1U1"/>
    <property type="match status" value="1"/>
</dbReference>
<dbReference type="PANTHER" id="PTHR36488:SF8">
    <property type="entry name" value="CASP-LIKE PROTEIN 1U1"/>
    <property type="match status" value="1"/>
</dbReference>
<dbReference type="Pfam" id="PF04535">
    <property type="entry name" value="CASP_dom"/>
    <property type="match status" value="1"/>
</dbReference>
<protein>
    <recommendedName>
        <fullName>CASP-like protein 1D1</fullName>
        <shortName>PtCASPL1D1</shortName>
    </recommendedName>
</protein>
<gene>
    <name type="ORF">POPTRDRAFT_820933</name>
</gene>
<comment type="subunit">
    <text evidence="1">Homodimer and heterodimers.</text>
</comment>
<comment type="subcellular location">
    <subcellularLocation>
        <location evidence="1">Cell membrane</location>
        <topology evidence="1">Multi-pass membrane protein</topology>
    </subcellularLocation>
</comment>
<comment type="similarity">
    <text evidence="4">Belongs to the Casparian strip membrane proteins (CASP) family.</text>
</comment>
<keyword id="KW-1003">Cell membrane</keyword>
<keyword id="KW-0472">Membrane</keyword>
<keyword id="KW-1185">Reference proteome</keyword>
<keyword id="KW-0812">Transmembrane</keyword>
<keyword id="KW-1133">Transmembrane helix</keyword>
<name>CSPLD_POPTR</name>
<sequence length="196" mass="20867">MASTDKPDRESIKSEEAPAAHPRRSNYSSVHVALRFLLFAASVTAVVVMVTAKQTKIVPVPGLPISVPLEAKFSDSPAFLYFISALSVAGLYGILTTLAAISIVLKPAYATRFLLHFALLDVLMLGIVASATGAAGGVAYVGLKGNSHVRWGKVCNVYDKFCQHVGSSIAVALFASVLLVLLTMLSVFSIYRKIPK</sequence>
<organism>
    <name type="scientific">Populus trichocarpa</name>
    <name type="common">Western balsam poplar</name>
    <name type="synonym">Populus balsamifera subsp. trichocarpa</name>
    <dbReference type="NCBI Taxonomy" id="3694"/>
    <lineage>
        <taxon>Eukaryota</taxon>
        <taxon>Viridiplantae</taxon>
        <taxon>Streptophyta</taxon>
        <taxon>Embryophyta</taxon>
        <taxon>Tracheophyta</taxon>
        <taxon>Spermatophyta</taxon>
        <taxon>Magnoliopsida</taxon>
        <taxon>eudicotyledons</taxon>
        <taxon>Gunneridae</taxon>
        <taxon>Pentapetalae</taxon>
        <taxon>rosids</taxon>
        <taxon>fabids</taxon>
        <taxon>Malpighiales</taxon>
        <taxon>Salicaceae</taxon>
        <taxon>Saliceae</taxon>
        <taxon>Populus</taxon>
    </lineage>
</organism>